<name>CYP10_CAEEL</name>
<keyword id="KW-0025">Alternative splicing</keyword>
<keyword id="KW-0413">Isomerase</keyword>
<keyword id="KW-1185">Reference proteome</keyword>
<keyword id="KW-0697">Rotamase</keyword>
<proteinExistence type="evidence at transcript level"/>
<protein>
    <recommendedName>
        <fullName>Peptidyl-prolyl cis-trans isomerase 10</fullName>
        <shortName>PPIase 10</shortName>
        <ecNumber>5.2.1.8</ecNumber>
    </recommendedName>
    <alternativeName>
        <fullName>Cyclophilin-10</fullName>
    </alternativeName>
    <alternativeName>
        <fullName>Rotamase 10</fullName>
    </alternativeName>
</protein>
<organism>
    <name type="scientific">Caenorhabditis elegans</name>
    <dbReference type="NCBI Taxonomy" id="6239"/>
    <lineage>
        <taxon>Eukaryota</taxon>
        <taxon>Metazoa</taxon>
        <taxon>Ecdysozoa</taxon>
        <taxon>Nematoda</taxon>
        <taxon>Chromadorea</taxon>
        <taxon>Rhabditida</taxon>
        <taxon>Rhabditina</taxon>
        <taxon>Rhabditomorpha</taxon>
        <taxon>Rhabditoidea</taxon>
        <taxon>Rhabditidae</taxon>
        <taxon>Peloderinae</taxon>
        <taxon>Caenorhabditis</taxon>
    </lineage>
</organism>
<gene>
    <name type="primary">cyn-10</name>
    <name type="synonym">cyp-10</name>
    <name type="ORF">B0252.4</name>
</gene>
<feature type="chain" id="PRO_0000064197" description="Peptidyl-prolyl cis-trans isomerase 10">
    <location>
        <begin position="1"/>
        <end position="161"/>
    </location>
</feature>
<feature type="domain" description="PPIase cyclophilin-type" evidence="1">
    <location>
        <begin position="1"/>
        <end position="153"/>
    </location>
</feature>
<feature type="splice variant" id="VSP_005183" description="In isoform a." evidence="2">
    <location>
        <begin position="148"/>
        <end position="161"/>
    </location>
</feature>
<accession>P52017</accession>
<accession>Q95ZZ8</accession>
<dbReference type="EC" id="5.2.1.8"/>
<dbReference type="EMBL" id="U34954">
    <property type="protein sequence ID" value="AAC47114.1"/>
    <property type="molecule type" value="mRNA"/>
</dbReference>
<dbReference type="EMBL" id="FO080139">
    <property type="protein sequence ID" value="CCD61541.1"/>
    <property type="molecule type" value="Genomic_DNA"/>
</dbReference>
<dbReference type="EMBL" id="FO080139">
    <property type="protein sequence ID" value="CCD61542.1"/>
    <property type="molecule type" value="Genomic_DNA"/>
</dbReference>
<dbReference type="PIR" id="T18577">
    <property type="entry name" value="T18577"/>
</dbReference>
<dbReference type="RefSeq" id="NP_001021890.1">
    <molecule id="P52017-1"/>
    <property type="nucleotide sequence ID" value="NM_001026719.5"/>
</dbReference>
<dbReference type="RefSeq" id="NP_495416.2">
    <molecule id="P52017-2"/>
    <property type="nucleotide sequence ID" value="NM_063015.5"/>
</dbReference>
<dbReference type="SMR" id="P52017"/>
<dbReference type="BioGRID" id="39470">
    <property type="interactions" value="5"/>
</dbReference>
<dbReference type="FunCoup" id="P52017">
    <property type="interactions" value="2636"/>
</dbReference>
<dbReference type="STRING" id="6239.B0252.4b.1"/>
<dbReference type="PaxDb" id="6239-B0252.4b"/>
<dbReference type="PeptideAtlas" id="P52017"/>
<dbReference type="EnsemblMetazoa" id="B0252.4a.1">
    <molecule id="P52017-2"/>
    <property type="protein sequence ID" value="B0252.4a.1"/>
    <property type="gene ID" value="WBGene00000886"/>
</dbReference>
<dbReference type="EnsemblMetazoa" id="B0252.4b.1">
    <molecule id="P52017-1"/>
    <property type="protein sequence ID" value="B0252.4b.1"/>
    <property type="gene ID" value="WBGene00000886"/>
</dbReference>
<dbReference type="GeneID" id="174132"/>
<dbReference type="KEGG" id="cel:CELE_B0252.4"/>
<dbReference type="UCSC" id="B0252.4b">
    <molecule id="P52017-1"/>
    <property type="organism name" value="c. elegans"/>
</dbReference>
<dbReference type="AGR" id="WB:WBGene00000886"/>
<dbReference type="CTD" id="174132"/>
<dbReference type="WormBase" id="B0252.4a">
    <molecule id="P52017-2"/>
    <property type="protein sequence ID" value="CE02420"/>
    <property type="gene ID" value="WBGene00000886"/>
    <property type="gene designation" value="cyn-10"/>
</dbReference>
<dbReference type="WormBase" id="B0252.4b">
    <molecule id="P52017-1"/>
    <property type="protein sequence ID" value="CE27567"/>
    <property type="gene ID" value="WBGene00000886"/>
    <property type="gene designation" value="cyn-10"/>
</dbReference>
<dbReference type="eggNOG" id="KOG0884">
    <property type="taxonomic scope" value="Eukaryota"/>
</dbReference>
<dbReference type="GeneTree" id="ENSGT00940000153189"/>
<dbReference type="InParanoid" id="P52017"/>
<dbReference type="OMA" id="VPFHRVM"/>
<dbReference type="OrthoDB" id="271386at2759"/>
<dbReference type="PhylomeDB" id="P52017"/>
<dbReference type="Reactome" id="R-CEL-72163">
    <property type="pathway name" value="mRNA Splicing - Major Pathway"/>
</dbReference>
<dbReference type="PRO" id="PR:P52017"/>
<dbReference type="Proteomes" id="UP000001940">
    <property type="component" value="Chromosome II"/>
</dbReference>
<dbReference type="Bgee" id="WBGene00000886">
    <property type="expression patterns" value="Expressed in germ line (C elegans) and 4 other cell types or tissues"/>
</dbReference>
<dbReference type="GO" id="GO:0071013">
    <property type="term" value="C:catalytic step 2 spliceosome"/>
    <property type="evidence" value="ECO:0000318"/>
    <property type="project" value="GO_Central"/>
</dbReference>
<dbReference type="GO" id="GO:0003755">
    <property type="term" value="F:peptidyl-prolyl cis-trans isomerase activity"/>
    <property type="evidence" value="ECO:0000318"/>
    <property type="project" value="GO_Central"/>
</dbReference>
<dbReference type="GO" id="GO:0006457">
    <property type="term" value="P:protein folding"/>
    <property type="evidence" value="ECO:0000318"/>
    <property type="project" value="GO_Central"/>
</dbReference>
<dbReference type="CDD" id="cd01928">
    <property type="entry name" value="Cyclophilin_PPIL3_like"/>
    <property type="match status" value="1"/>
</dbReference>
<dbReference type="FunFam" id="2.40.100.10:FF:000012">
    <property type="entry name" value="Peptidyl-prolyl cis-trans isomerase"/>
    <property type="match status" value="1"/>
</dbReference>
<dbReference type="Gene3D" id="2.40.100.10">
    <property type="entry name" value="Cyclophilin-like"/>
    <property type="match status" value="1"/>
</dbReference>
<dbReference type="InterPro" id="IPR029000">
    <property type="entry name" value="Cyclophilin-like_dom_sf"/>
</dbReference>
<dbReference type="InterPro" id="IPR024936">
    <property type="entry name" value="Cyclophilin-type_PPIase"/>
</dbReference>
<dbReference type="InterPro" id="IPR020892">
    <property type="entry name" value="Cyclophilin-type_PPIase_CS"/>
</dbReference>
<dbReference type="InterPro" id="IPR002130">
    <property type="entry name" value="Cyclophilin-type_PPIase_dom"/>
</dbReference>
<dbReference type="InterPro" id="IPR044666">
    <property type="entry name" value="Cyclophilin_A-like"/>
</dbReference>
<dbReference type="PANTHER" id="PTHR45625:SF2">
    <property type="entry name" value="PEPTIDYL-PROLYL CIS-TRANS ISOMERASE-LIKE 3"/>
    <property type="match status" value="1"/>
</dbReference>
<dbReference type="PANTHER" id="PTHR45625">
    <property type="entry name" value="PEPTIDYL-PROLYL CIS-TRANS ISOMERASE-RELATED"/>
    <property type="match status" value="1"/>
</dbReference>
<dbReference type="Pfam" id="PF00160">
    <property type="entry name" value="Pro_isomerase"/>
    <property type="match status" value="1"/>
</dbReference>
<dbReference type="PIRSF" id="PIRSF001467">
    <property type="entry name" value="Peptidylpro_ismrse"/>
    <property type="match status" value="1"/>
</dbReference>
<dbReference type="PRINTS" id="PR00153">
    <property type="entry name" value="CSAPPISMRASE"/>
</dbReference>
<dbReference type="SUPFAM" id="SSF50891">
    <property type="entry name" value="Cyclophilin-like"/>
    <property type="match status" value="1"/>
</dbReference>
<dbReference type="PROSITE" id="PS00170">
    <property type="entry name" value="CSA_PPIASE_1"/>
    <property type="match status" value="1"/>
</dbReference>
<dbReference type="PROSITE" id="PS50072">
    <property type="entry name" value="CSA_PPIASE_2"/>
    <property type="match status" value="1"/>
</dbReference>
<sequence length="161" mass="17960">MSVTLHTTSGDIKIELYVDDAPKACENFLALCASDYYNGCIFHRNIKDFMVQTGDPTHSGKGGESIWGGPFEDEFVSALKHDSRGCVSMANNGPDSNRSQFFITYAKQAHLDMKYTLFGKVIDGFDTLEEIETIKVDNKYRPLVQQKIQNVTIHANPMAAD</sequence>
<evidence type="ECO:0000255" key="1">
    <source>
        <dbReference type="PROSITE-ProRule" id="PRU00156"/>
    </source>
</evidence>
<evidence type="ECO:0000303" key="2">
    <source>
    </source>
</evidence>
<evidence type="ECO:0000305" key="3"/>
<reference key="1">
    <citation type="journal article" date="1996" name="Biochem. J.">
        <title>Cloning and biochemical characterization of the cyclophilin homologues from the free-living nematode Caenorhabditis elegans.</title>
        <authorList>
            <person name="Page A.P."/>
            <person name="Macniven K."/>
            <person name="Hengartner M.O."/>
        </authorList>
    </citation>
    <scope>NUCLEOTIDE SEQUENCE [MRNA] (ISOFORM A)</scope>
    <source>
        <strain>Bristol N2</strain>
    </source>
</reference>
<reference key="2">
    <citation type="journal article" date="1998" name="Science">
        <title>Genome sequence of the nematode C. elegans: a platform for investigating biology.</title>
        <authorList>
            <consortium name="The C. elegans sequencing consortium"/>
        </authorList>
    </citation>
    <scope>NUCLEOTIDE SEQUENCE [LARGE SCALE GENOMIC DNA]</scope>
    <scope>ALTERNATIVE SPLICING</scope>
    <source>
        <strain>Bristol N2</strain>
    </source>
</reference>
<comment type="function">
    <text>PPIases accelerate the folding of proteins. It catalyzes the cis-trans isomerization of proline imidic peptide bonds in oligopeptides.</text>
</comment>
<comment type="catalytic activity">
    <reaction>
        <text>[protein]-peptidylproline (omega=180) = [protein]-peptidylproline (omega=0)</text>
        <dbReference type="Rhea" id="RHEA:16237"/>
        <dbReference type="Rhea" id="RHEA-COMP:10747"/>
        <dbReference type="Rhea" id="RHEA-COMP:10748"/>
        <dbReference type="ChEBI" id="CHEBI:83833"/>
        <dbReference type="ChEBI" id="CHEBI:83834"/>
        <dbReference type="EC" id="5.2.1.8"/>
    </reaction>
</comment>
<comment type="alternative products">
    <event type="alternative splicing"/>
    <isoform>
        <id>P52017-1</id>
        <name>b</name>
        <sequence type="displayed"/>
    </isoform>
    <isoform>
        <id>P52017-2</id>
        <name>a</name>
        <sequence type="described" ref="VSP_005183"/>
    </isoform>
</comment>
<comment type="similarity">
    <text evidence="3">Belongs to the cyclophilin-type PPIase family. PPIL3 subfamily.</text>
</comment>